<evidence type="ECO:0000255" key="1">
    <source>
        <dbReference type="PROSITE-ProRule" id="PRU00042"/>
    </source>
</evidence>
<evidence type="ECO:0000256" key="2">
    <source>
        <dbReference type="SAM" id="MobiDB-lite"/>
    </source>
</evidence>
<evidence type="ECO:0000305" key="3"/>
<feature type="chain" id="PRO_0000242165" description="Zinc finger protein 414">
    <location>
        <begin position="1"/>
        <end position="299"/>
    </location>
</feature>
<feature type="zinc finger region" description="C2H2-type 1" evidence="1">
    <location>
        <begin position="99"/>
        <end position="123"/>
    </location>
</feature>
<feature type="zinc finger region" description="C2H2-type 2" evidence="1">
    <location>
        <begin position="135"/>
        <end position="159"/>
    </location>
</feature>
<feature type="zinc finger region" description="C2H2-type 3; degenerate" evidence="1">
    <location>
        <begin position="166"/>
        <end position="190"/>
    </location>
</feature>
<feature type="region of interest" description="Disordered" evidence="2">
    <location>
        <begin position="1"/>
        <end position="102"/>
    </location>
</feature>
<feature type="region of interest" description="Disordered" evidence="2">
    <location>
        <begin position="193"/>
        <end position="228"/>
    </location>
</feature>
<feature type="region of interest" description="Disordered" evidence="2">
    <location>
        <begin position="254"/>
        <end position="299"/>
    </location>
</feature>
<feature type="compositionally biased region" description="Polar residues" evidence="2">
    <location>
        <begin position="1"/>
        <end position="20"/>
    </location>
</feature>
<feature type="compositionally biased region" description="Polar residues" evidence="2">
    <location>
        <begin position="70"/>
        <end position="80"/>
    </location>
</feature>
<feature type="compositionally biased region" description="Basic and acidic residues" evidence="2">
    <location>
        <begin position="203"/>
        <end position="215"/>
    </location>
</feature>
<feature type="compositionally biased region" description="Low complexity" evidence="2">
    <location>
        <begin position="217"/>
        <end position="228"/>
    </location>
</feature>
<feature type="compositionally biased region" description="Polar residues" evidence="2">
    <location>
        <begin position="268"/>
        <end position="285"/>
    </location>
</feature>
<accession>Q5PPH4</accession>
<proteinExistence type="evidence at transcript level"/>
<organism>
    <name type="scientific">Rattus norvegicus</name>
    <name type="common">Rat</name>
    <dbReference type="NCBI Taxonomy" id="10116"/>
    <lineage>
        <taxon>Eukaryota</taxon>
        <taxon>Metazoa</taxon>
        <taxon>Chordata</taxon>
        <taxon>Craniata</taxon>
        <taxon>Vertebrata</taxon>
        <taxon>Euteleostomi</taxon>
        <taxon>Mammalia</taxon>
        <taxon>Eutheria</taxon>
        <taxon>Euarchontoglires</taxon>
        <taxon>Glires</taxon>
        <taxon>Rodentia</taxon>
        <taxon>Myomorpha</taxon>
        <taxon>Muroidea</taxon>
        <taxon>Muridae</taxon>
        <taxon>Murinae</taxon>
        <taxon>Rattus</taxon>
    </lineage>
</organism>
<dbReference type="EMBL" id="BC087693">
    <property type="protein sequence ID" value="AAH87693.1"/>
    <property type="molecule type" value="mRNA"/>
</dbReference>
<dbReference type="RefSeq" id="NP_001009664.1">
    <property type="nucleotide sequence ID" value="NM_001009664.1"/>
</dbReference>
<dbReference type="FunCoup" id="Q5PPH4">
    <property type="interactions" value="726"/>
</dbReference>
<dbReference type="STRING" id="10116.ENSRNOP00000011094"/>
<dbReference type="GlyGen" id="Q5PPH4">
    <property type="glycosylation" value="1 site"/>
</dbReference>
<dbReference type="PhosphoSitePlus" id="Q5PPH4"/>
<dbReference type="PaxDb" id="10116-ENSRNOP00000011094"/>
<dbReference type="GeneID" id="299647"/>
<dbReference type="KEGG" id="rno:299647"/>
<dbReference type="UCSC" id="RGD:1308123">
    <property type="organism name" value="rat"/>
</dbReference>
<dbReference type="AGR" id="RGD:1308123"/>
<dbReference type="CTD" id="328801"/>
<dbReference type="RGD" id="1308123">
    <property type="gene designation" value="Zfp414"/>
</dbReference>
<dbReference type="VEuPathDB" id="HostDB:ENSRNOG00000008378"/>
<dbReference type="eggNOG" id="KOG1721">
    <property type="taxonomic scope" value="Eukaryota"/>
</dbReference>
<dbReference type="HOGENOM" id="CLU_049178_0_0_1"/>
<dbReference type="InParanoid" id="Q5PPH4"/>
<dbReference type="OrthoDB" id="8730587at2759"/>
<dbReference type="PhylomeDB" id="Q5PPH4"/>
<dbReference type="TreeFam" id="TF337512"/>
<dbReference type="PRO" id="PR:Q5PPH4"/>
<dbReference type="Proteomes" id="UP000002494">
    <property type="component" value="Chromosome 7"/>
</dbReference>
<dbReference type="Bgee" id="ENSRNOG00000008378">
    <property type="expression patterns" value="Expressed in testis and 20 other cell types or tissues"/>
</dbReference>
<dbReference type="GO" id="GO:0005634">
    <property type="term" value="C:nucleus"/>
    <property type="evidence" value="ECO:0007669"/>
    <property type="project" value="UniProtKB-SubCell"/>
</dbReference>
<dbReference type="GO" id="GO:0003677">
    <property type="term" value="F:DNA binding"/>
    <property type="evidence" value="ECO:0007669"/>
    <property type="project" value="UniProtKB-KW"/>
</dbReference>
<dbReference type="GO" id="GO:0008270">
    <property type="term" value="F:zinc ion binding"/>
    <property type="evidence" value="ECO:0007669"/>
    <property type="project" value="UniProtKB-KW"/>
</dbReference>
<dbReference type="Gene3D" id="3.30.160.60">
    <property type="entry name" value="Classic Zinc Finger"/>
    <property type="match status" value="1"/>
</dbReference>
<dbReference type="InterPro" id="IPR039882">
    <property type="entry name" value="ZN414"/>
</dbReference>
<dbReference type="InterPro" id="IPR031799">
    <property type="entry name" value="Znf-C2H2_ribbon"/>
</dbReference>
<dbReference type="InterPro" id="IPR013087">
    <property type="entry name" value="Znf_C2H2_type"/>
</dbReference>
<dbReference type="PANTHER" id="PTHR21695">
    <property type="entry name" value="ZINC FINGER PROTEIN 414"/>
    <property type="match status" value="1"/>
</dbReference>
<dbReference type="PANTHER" id="PTHR21695:SF0">
    <property type="entry name" value="ZINC FINGER PROTEIN 414"/>
    <property type="match status" value="1"/>
</dbReference>
<dbReference type="Pfam" id="PF15909">
    <property type="entry name" value="zf-C2H2_8"/>
    <property type="match status" value="1"/>
</dbReference>
<dbReference type="SMART" id="SM00355">
    <property type="entry name" value="ZnF_C2H2"/>
    <property type="match status" value="3"/>
</dbReference>
<dbReference type="PROSITE" id="PS00028">
    <property type="entry name" value="ZINC_FINGER_C2H2_1"/>
    <property type="match status" value="2"/>
</dbReference>
<dbReference type="PROSITE" id="PS50157">
    <property type="entry name" value="ZINC_FINGER_C2H2_2"/>
    <property type="match status" value="3"/>
</dbReference>
<protein>
    <recommendedName>
        <fullName>Zinc finger protein 414</fullName>
    </recommendedName>
</protein>
<comment type="function">
    <text>May be involved in transcriptional regulation.</text>
</comment>
<comment type="subcellular location">
    <subcellularLocation>
        <location evidence="3">Nucleus</location>
    </subcellularLocation>
</comment>
<comment type="similarity">
    <text evidence="3">Belongs to the krueppel C2H2-type zinc-finger protein family.</text>
</comment>
<name>ZN414_RAT</name>
<gene>
    <name type="primary">Znf414</name>
    <name type="synonym">Zfp414</name>
</gene>
<keyword id="KW-0238">DNA-binding</keyword>
<keyword id="KW-0479">Metal-binding</keyword>
<keyword id="KW-0539">Nucleus</keyword>
<keyword id="KW-1185">Reference proteome</keyword>
<keyword id="KW-0677">Repeat</keyword>
<keyword id="KW-0804">Transcription</keyword>
<keyword id="KW-0805">Transcription regulation</keyword>
<keyword id="KW-0862">Zinc</keyword>
<keyword id="KW-0863">Zinc-finger</keyword>
<reference key="1">
    <citation type="journal article" date="2004" name="Genome Res.">
        <title>The status, quality, and expansion of the NIH full-length cDNA project: the Mammalian Gene Collection (MGC).</title>
        <authorList>
            <consortium name="The MGC Project Team"/>
        </authorList>
    </citation>
    <scope>NUCLEOTIDE SEQUENCE [LARGE SCALE MRNA]</scope>
    <source>
        <tissue>Ovary</tissue>
    </source>
</reference>
<sequence length="299" mass="31967">MEELSGPSSDTLATVESSSNEPDKEVASPDVAATATLSSVEEPGPNPTATPPVWDRGGPLQQVACPVPDSCQTSSTTRGVGTNEDLRLPRRRPPPGKQIPCSSPGCSLSFPSVRDLAQHLRTHCPPTQSLEGKLFRCSALSCTESFPSMQELVAHGKLHYKPNRYFKCENCLLRFRTHRSLFKHLHVCIDHGQNPAPPPPPALDKEPPVPERPPESDPSSSLGLPFPLLEPFTSAPTGPFLPYLNPAPFGLSPPRLRPFLAATPGPPTSSTAIWKKSQGATSSPRRPQGGSDAPSGACR</sequence>